<feature type="chain" id="PRO_0000333035" description="Cysteine-type anaerobic sulfatase-maturating enzyme">
    <location>
        <begin position="1"/>
        <end position="370"/>
    </location>
</feature>
<feature type="domain" description="Radical SAM core" evidence="1">
    <location>
        <begin position="1"/>
        <end position="227"/>
    </location>
</feature>
<feature type="active site" description="Proton acceptor" evidence="12">
    <location>
        <position position="277"/>
    </location>
</feature>
<feature type="binding site" evidence="8 13 14 15 16">
    <location>
        <position position="15"/>
    </location>
    <ligand>
        <name>[4Fe-4S] cluster</name>
        <dbReference type="ChEBI" id="CHEBI:49883"/>
        <label>1</label>
        <note>4Fe-4S-S-AdoMet</note>
    </ligand>
</feature>
<feature type="binding site" evidence="8 13 14 15 16">
    <location>
        <position position="19"/>
    </location>
    <ligand>
        <name>[4Fe-4S] cluster</name>
        <dbReference type="ChEBI" id="CHEBI:49883"/>
        <label>1</label>
        <note>4Fe-4S-S-AdoMet</note>
    </ligand>
</feature>
<feature type="binding site" evidence="8 13 14 15 16">
    <location>
        <position position="21"/>
    </location>
    <ligand>
        <name>S-adenosyl-L-methionine</name>
        <dbReference type="ChEBI" id="CHEBI:59789"/>
    </ligand>
</feature>
<feature type="binding site" evidence="8 13 14 15 16">
    <location>
        <position position="22"/>
    </location>
    <ligand>
        <name>[4Fe-4S] cluster</name>
        <dbReference type="ChEBI" id="CHEBI:49883"/>
        <label>1</label>
        <note>4Fe-4S-S-AdoMet</note>
    </ligand>
</feature>
<feature type="binding site" evidence="8 13 14 15 16">
    <location>
        <position position="66"/>
    </location>
    <ligand>
        <name>S-adenosyl-L-methionine</name>
        <dbReference type="ChEBI" id="CHEBI:59789"/>
    </ligand>
</feature>
<feature type="binding site" evidence="8 13 14 15 16">
    <location>
        <position position="122"/>
    </location>
    <ligand>
        <name>S-adenosyl-L-methionine</name>
        <dbReference type="ChEBI" id="CHEBI:59789"/>
    </ligand>
</feature>
<feature type="binding site" evidence="8 13 14 15 16">
    <location>
        <position position="134"/>
    </location>
    <ligand>
        <name>S-adenosyl-L-methionine</name>
        <dbReference type="ChEBI" id="CHEBI:59789"/>
    </ligand>
</feature>
<feature type="binding site" evidence="8 13 14 15 16">
    <location>
        <position position="195"/>
    </location>
    <ligand>
        <name>S-adenosyl-L-methionine</name>
        <dbReference type="ChEBI" id="CHEBI:59789"/>
    </ligand>
</feature>
<feature type="binding site" evidence="8 13 14 15 16">
    <location>
        <position position="255"/>
    </location>
    <ligand>
        <name>[4Fe-4S] cluster</name>
        <dbReference type="ChEBI" id="CHEBI:49883"/>
        <label>2</label>
    </ligand>
</feature>
<feature type="binding site" evidence="8 13 14 15 16">
    <location>
        <position position="261"/>
    </location>
    <ligand>
        <name>[4Fe-4S] cluster</name>
        <dbReference type="ChEBI" id="CHEBI:49883"/>
        <label>2</label>
    </ligand>
</feature>
<feature type="binding site" evidence="8 13 14 15 16">
    <location>
        <position position="276"/>
    </location>
    <ligand>
        <name>[4Fe-4S] cluster</name>
        <dbReference type="ChEBI" id="CHEBI:49883"/>
        <label>2</label>
    </ligand>
</feature>
<feature type="binding site" evidence="8 13 14 15 16">
    <location>
        <position position="317"/>
    </location>
    <ligand>
        <name>[4Fe-4S] cluster</name>
        <dbReference type="ChEBI" id="CHEBI:49883"/>
        <label>3</label>
    </ligand>
</feature>
<feature type="binding site" evidence="8 13 14 15 16">
    <location>
        <position position="320"/>
    </location>
    <ligand>
        <name>[4Fe-4S] cluster</name>
        <dbReference type="ChEBI" id="CHEBI:49883"/>
        <label>3</label>
    </ligand>
</feature>
<feature type="binding site" evidence="8 13 14 15 16">
    <location>
        <position position="326"/>
    </location>
    <ligand>
        <name>[4Fe-4S] cluster</name>
        <dbReference type="ChEBI" id="CHEBI:49883"/>
        <label>3</label>
    </ligand>
</feature>
<feature type="binding site" evidence="8 13 14 15 16">
    <location>
        <position position="330"/>
    </location>
    <ligand>
        <name>[4Fe-4S] cluster</name>
        <dbReference type="ChEBI" id="CHEBI:49883"/>
        <label>2</label>
    </ligand>
</feature>
<feature type="binding site" evidence="8 13 14 15 16">
    <location>
        <position position="348"/>
    </location>
    <ligand>
        <name>[4Fe-4S] cluster</name>
        <dbReference type="ChEBI" id="CHEBI:49883"/>
        <label>3</label>
    </ligand>
</feature>
<feature type="mutagenesis site" description="Decrease in 4Fe-4S content; when associated with A-19 and A-22." evidence="7">
    <original>C</original>
    <variation>A</variation>
    <location>
        <position position="15"/>
    </location>
</feature>
<feature type="mutagenesis site" description="Decrease in 4Fe-4S content; when associated with A-15 and A-22." evidence="7">
    <original>C</original>
    <variation>A</variation>
    <location>
        <position position="19"/>
    </location>
</feature>
<feature type="mutagenesis site" description="Decrease in 4Fe-4S content; when associated with A-15 and A-19." evidence="7">
    <original>C</original>
    <variation>A</variation>
    <location>
        <position position="22"/>
    </location>
</feature>
<feature type="mutagenesis site" description="Retains 11.7% of FGly production activity." evidence="8">
    <original>Y</original>
    <variation>F</variation>
    <location>
        <position position="24"/>
    </location>
</feature>
<feature type="mutagenesis site" description="Exhibits reduced solubility and drastically reduced activity." evidence="7">
    <original>C</original>
    <variation>A</variation>
    <location>
        <position position="276"/>
    </location>
</feature>
<feature type="mutagenesis site" description="Retains 0.8% of FGly production activity." evidence="8">
    <original>D</original>
    <variation>N</variation>
    <location>
        <position position="277"/>
    </location>
</feature>
<feature type="strand" evidence="17">
    <location>
        <begin position="4"/>
        <end position="8"/>
    </location>
</feature>
<feature type="turn" evidence="17">
    <location>
        <begin position="10"/>
        <end position="13"/>
    </location>
</feature>
<feature type="strand" evidence="18">
    <location>
        <begin position="23"/>
        <end position="26"/>
    </location>
</feature>
<feature type="helix" evidence="17">
    <location>
        <begin position="41"/>
        <end position="54"/>
    </location>
</feature>
<feature type="strand" evidence="17">
    <location>
        <begin position="57"/>
        <end position="63"/>
    </location>
</feature>
<feature type="helix" evidence="17">
    <location>
        <begin position="68"/>
        <end position="71"/>
    </location>
</feature>
<feature type="helix" evidence="17">
    <location>
        <begin position="73"/>
        <end position="86"/>
    </location>
</feature>
<feature type="strand" evidence="17">
    <location>
        <begin position="92"/>
        <end position="99"/>
    </location>
</feature>
<feature type="helix" evidence="17">
    <location>
        <begin position="106"/>
        <end position="114"/>
    </location>
</feature>
<feature type="strand" evidence="17">
    <location>
        <begin position="118"/>
        <end position="122"/>
    </location>
</feature>
<feature type="helix" evidence="17">
    <location>
        <begin position="127"/>
        <end position="133"/>
    </location>
</feature>
<feature type="helix" evidence="17">
    <location>
        <begin position="143"/>
        <end position="156"/>
    </location>
</feature>
<feature type="strand" evidence="17">
    <location>
        <begin position="159"/>
        <end position="166"/>
    </location>
</feature>
<feature type="helix" evidence="17">
    <location>
        <begin position="168"/>
        <end position="172"/>
    </location>
</feature>
<feature type="helix" evidence="17">
    <location>
        <begin position="174"/>
        <end position="183"/>
    </location>
</feature>
<feature type="strand" evidence="17">
    <location>
        <begin position="188"/>
        <end position="193"/>
    </location>
</feature>
<feature type="helix" evidence="17">
    <location>
        <begin position="211"/>
        <end position="230"/>
    </location>
</feature>
<feature type="helix" evidence="17">
    <location>
        <begin position="238"/>
        <end position="249"/>
    </location>
</feature>
<feature type="strand" evidence="17">
    <location>
        <begin position="257"/>
        <end position="260"/>
    </location>
</feature>
<feature type="strand" evidence="17">
    <location>
        <begin position="271"/>
        <end position="275"/>
    </location>
</feature>
<feature type="helix" evidence="17">
    <location>
        <begin position="277"/>
        <end position="279"/>
    </location>
</feature>
<feature type="helix" evidence="17">
    <location>
        <begin position="282"/>
        <end position="284"/>
    </location>
</feature>
<feature type="turn" evidence="17">
    <location>
        <begin position="289"/>
        <end position="291"/>
    </location>
</feature>
<feature type="helix" evidence="17">
    <location>
        <begin position="294"/>
        <end position="298"/>
    </location>
</feature>
<feature type="helix" evidence="17">
    <location>
        <begin position="301"/>
        <end position="309"/>
    </location>
</feature>
<feature type="helix" evidence="17">
    <location>
        <begin position="315"/>
        <end position="319"/>
    </location>
</feature>
<feature type="helix" evidence="17">
    <location>
        <begin position="323"/>
        <end position="326"/>
    </location>
</feature>
<feature type="helix" evidence="17">
    <location>
        <begin position="331"/>
        <end position="333"/>
    </location>
</feature>
<feature type="helix" evidence="17">
    <location>
        <begin position="348"/>
        <end position="368"/>
    </location>
</feature>
<proteinExistence type="evidence at protein level"/>
<accession>Q0TTH1</accession>
<sequence>MPPLSLLIKPASSGCNLKCTYCFYHSLSDNRNVKSYGIMRDEVLESMVKRVLNEANGHCSFAFQGGEPTLAGLEFFEKLMELQRKHNYKNLKIYNSLQTNGTLIDESWAKFLSENKFLVGLSMDGPKEIHNLNRKDCCGLDTFSKVERAAELFKKYKVEFNILCVVTSNTARHVNKVYKYFKEKDFKFLQFINCLDPLYEEKGKYNYSLKPKDYTKFLKNLFDFWYEDFLNGNRVSIRYFDGLLETILLGKSSSCGMNGTCTCQFVVESDGSVYPCDFYVLDKWRLGNIQDMTMKELFETNKNHEFIKLSFKVHEECKKCKWFRLCKGGCRRCRDSKEDSALELNYYCQSYKEFFEYAFPRLINVANNIK</sequence>
<name>ANSME_CLOP1</name>
<reference key="1">
    <citation type="journal article" date="2006" name="Genome Res.">
        <title>Skewed genomic variability in strains of the toxigenic bacterial pathogen, Clostridium perfringens.</title>
        <authorList>
            <person name="Myers G.S.A."/>
            <person name="Rasko D.A."/>
            <person name="Cheung J.K."/>
            <person name="Ravel J."/>
            <person name="Seshadri R."/>
            <person name="DeBoy R.T."/>
            <person name="Ren Q."/>
            <person name="Varga J."/>
            <person name="Awad M.M."/>
            <person name="Brinkac L.M."/>
            <person name="Daugherty S.C."/>
            <person name="Haft D.H."/>
            <person name="Dodson R.J."/>
            <person name="Madupu R."/>
            <person name="Nelson W.C."/>
            <person name="Rosovitz M.J."/>
            <person name="Sullivan S.A."/>
            <person name="Khouri H."/>
            <person name="Dimitrov G.I."/>
            <person name="Watkins K.L."/>
            <person name="Mulligan S."/>
            <person name="Benton J."/>
            <person name="Radune D."/>
            <person name="Fisher D.J."/>
            <person name="Atkins H.S."/>
            <person name="Hiscox T."/>
            <person name="Jost B.H."/>
            <person name="Billington S.J."/>
            <person name="Songer J.G."/>
            <person name="McClane B.A."/>
            <person name="Titball R.W."/>
            <person name="Rood J.I."/>
            <person name="Melville S.B."/>
            <person name="Paulsen I.T."/>
        </authorList>
    </citation>
    <scope>NUCLEOTIDE SEQUENCE [LARGE SCALE GENOMIC DNA]</scope>
    <source>
        <strain>ATCC 13124 / DSM 756 / JCM 1290 / NCIMB 6125 / NCTC 8237 / S 107 / Type A</strain>
    </source>
</reference>
<reference key="2">
    <citation type="journal article" date="2006" name="J. Biol. Chem.">
        <title>A new type of bacterial sulfatase reveals a novel maturation pathway in prokaryotes.</title>
        <authorList>
            <person name="Berteau O."/>
            <person name="Guillot A."/>
            <person name="Benjdia A."/>
            <person name="Rabot S."/>
        </authorList>
    </citation>
    <scope>FUNCTION IN SULFATASE MATURATION</scope>
</reference>
<reference key="3">
    <citation type="journal article" date="2007" name="J. Am. Chem. Soc.">
        <title>Anaerobic sulfatase-maturating enzymes: radical SAM enzymes able to catalyze in vitro sulfatase post-translational modification.</title>
        <authorList>
            <person name="Benjdia A."/>
            <person name="Leprince J."/>
            <person name="Guillot A."/>
            <person name="Vaudry H."/>
            <person name="Rabot S."/>
            <person name="Berteau O."/>
        </authorList>
    </citation>
    <scope>FUNCTION</scope>
    <scope>CATALYTIC ACTIVITY</scope>
    <scope>COFACTOR</scope>
    <scope>REACTION MECHANISM</scope>
</reference>
<reference key="4">
    <citation type="journal article" date="2008" name="J. Biol. Chem.">
        <title>Anaerobic sulfatase-maturating enzymes - first dual substrate radical S-adenosylmethionine enzymes.</title>
        <authorList>
            <person name="Benjdia A."/>
            <person name="Subramanian S."/>
            <person name="Leprince J."/>
            <person name="Vaudry H."/>
            <person name="Johnson M.K."/>
            <person name="Berteau O."/>
        </authorList>
    </citation>
    <scope>FUNCTION</scope>
    <scope>CATALYTIC ACTIVITY</scope>
    <scope>SUBSTRATE SPECIFICITY</scope>
    <scope>COFACTOR</scope>
    <scope>SPECTROSCOPIC STUDIES</scope>
    <scope>REACTION MECHANISM</scope>
</reference>
<reference key="5">
    <citation type="journal article" date="2009" name="J. Am. Chem. Soc.">
        <title>Mechanistic investigations of anaerobic sulfatase-maturating enzyme: direct Cbeta H-atom abstraction catalyzed by a radical AdoMet enzyme.</title>
        <authorList>
            <person name="Benjdia A."/>
            <person name="Leprince J."/>
            <person name="Sandstroem C."/>
            <person name="Vaudry H."/>
            <person name="Berteau O."/>
        </authorList>
    </citation>
    <scope>FUNCTION</scope>
    <scope>CATALYTIC ACTIVITY</scope>
    <scope>REACTION MECHANISM</scope>
</reference>
<reference key="6">
    <citation type="journal article" date="2010" name="FEBS J.">
        <title>Anaerobic sulfatase-maturating enzyme--a mechanistic link with glycyl radical-activating enzymes?</title>
        <authorList>
            <person name="Benjdia A."/>
            <person name="Subramanian S."/>
            <person name="Leprince J."/>
            <person name="Vaudry H."/>
            <person name="Johnson M.K."/>
            <person name="Berteau O."/>
        </authorList>
    </citation>
    <scope>CATALYTIC ACTIVITY</scope>
</reference>
<reference key="7">
    <citation type="journal article" date="2013" name="Biochemistry">
        <title>Further characterization of Cys-type and Ser-type anaerobic sulfatase maturating enzymes suggests a commonality in the mechanism of catalysis.</title>
        <authorList>
            <person name="Grove T.L."/>
            <person name="Ahlum J.H."/>
            <person name="Qin R.M."/>
            <person name="Lanz N.D."/>
            <person name="Radle M.I."/>
            <person name="Krebs C."/>
            <person name="Booker S.J."/>
        </authorList>
    </citation>
    <scope>FUNCTION</scope>
    <scope>CATALYTIC ACTIVITY</scope>
    <scope>COFACTOR</scope>
    <scope>SUBUNIT</scope>
    <scope>MUTAGENESIS OF CYS-15; CYS-19; CYS-22 AND CYS-276</scope>
    <source>
        <strain>ATCC 13124 / DSM 756 / JCM 1290 / NCIMB 6125 / NCTC 8237 / S 107 / Type A</strain>
    </source>
</reference>
<reference evidence="13 14 15 16" key="8">
    <citation type="journal article" date="2013" name="Proc. Natl. Acad. Sci. U.S.A.">
        <title>X-ray structure of an AdoMet radical activase reveals an anaerobic solution for formylglycine posttranslational modification.</title>
        <authorList>
            <person name="Goldman P.J."/>
            <person name="Grove T.L."/>
            <person name="Sites L.A."/>
            <person name="McLaughlin M.I."/>
            <person name="Booker S.J."/>
            <person name="Drennan C.L."/>
        </authorList>
    </citation>
    <scope>X-RAY CRYSTALLOGRAPHY (1.62 ANGSTROMS) IN COMPLEXES WITH IRON-SULFUR (4FE-4S); S-ADENOSYL-L-METHIONINE AND PEPTIDYL-SUBSTRATES</scope>
    <scope>COFACTOR</scope>
    <scope>REACTION MECHANISM</scope>
    <scope>ACTIVE SITE</scope>
    <scope>MUTAGENESIS OF TYR-24 AND ASP-277</scope>
</reference>
<organism>
    <name type="scientific">Clostridium perfringens (strain ATCC 13124 / DSM 756 / JCM 1290 / NCIMB 6125 / NCTC 8237 / Type A)</name>
    <dbReference type="NCBI Taxonomy" id="195103"/>
    <lineage>
        <taxon>Bacteria</taxon>
        <taxon>Bacillati</taxon>
        <taxon>Bacillota</taxon>
        <taxon>Clostridia</taxon>
        <taxon>Eubacteriales</taxon>
        <taxon>Clostridiaceae</taxon>
        <taxon>Clostridium</taxon>
    </lineage>
</organism>
<protein>
    <recommendedName>
        <fullName evidence="11">Cysteine-type anaerobic sulfatase-maturating enzyme</fullName>
        <shortName>Cys-type anaerobic sulfatase-maturating enzyme</shortName>
        <ecNumber evidence="3 4 5 6 7">1.8.98.7</ecNumber>
    </recommendedName>
    <alternativeName>
        <fullName evidence="9">Anaerobic sulfatase-maturating enzyme</fullName>
        <shortName evidence="9">AnSME</shortName>
    </alternativeName>
    <alternativeName>
        <fullName evidence="10">anSMEcpe</fullName>
    </alternativeName>
</protein>
<keyword id="KW-0002">3D-structure</keyword>
<keyword id="KW-0004">4Fe-4S</keyword>
<keyword id="KW-0408">Iron</keyword>
<keyword id="KW-0411">Iron-sulfur</keyword>
<keyword id="KW-0479">Metal-binding</keyword>
<keyword id="KW-0560">Oxidoreductase</keyword>
<keyword id="KW-0949">S-adenosyl-L-methionine</keyword>
<dbReference type="EC" id="1.8.98.7" evidence="3 4 5 6 7"/>
<dbReference type="EMBL" id="CP000246">
    <property type="protein sequence ID" value="ABG83662.1"/>
    <property type="molecule type" value="Genomic_DNA"/>
</dbReference>
<dbReference type="RefSeq" id="WP_011590280.1">
    <property type="nucleotide sequence ID" value="NC_008261.1"/>
</dbReference>
<dbReference type="PDB" id="4K36">
    <property type="method" value="X-ray"/>
    <property type="resolution" value="1.62 A"/>
    <property type="chains" value="A/B=1-370"/>
</dbReference>
<dbReference type="PDB" id="4K37">
    <property type="method" value="X-ray"/>
    <property type="resolution" value="1.62 A"/>
    <property type="chains" value="A/B=1-370"/>
</dbReference>
<dbReference type="PDB" id="4K38">
    <property type="method" value="X-ray"/>
    <property type="resolution" value="1.83 A"/>
    <property type="chains" value="A/B=1-370"/>
</dbReference>
<dbReference type="PDB" id="4K39">
    <property type="method" value="X-ray"/>
    <property type="resolution" value="1.78 A"/>
    <property type="chains" value="A/B=1-370"/>
</dbReference>
<dbReference type="PDBsum" id="4K36"/>
<dbReference type="PDBsum" id="4K37"/>
<dbReference type="PDBsum" id="4K38"/>
<dbReference type="PDBsum" id="4K39"/>
<dbReference type="SMR" id="Q0TTH1"/>
<dbReference type="STRING" id="195103.CPF_0616"/>
<dbReference type="PaxDb" id="195103-CPF_0616"/>
<dbReference type="KEGG" id="cpf:CPF_0616"/>
<dbReference type="eggNOG" id="COG0641">
    <property type="taxonomic scope" value="Bacteria"/>
</dbReference>
<dbReference type="HOGENOM" id="CLU_009273_10_0_9"/>
<dbReference type="BRENDA" id="1.8.98.7">
    <property type="organism ID" value="1503"/>
</dbReference>
<dbReference type="UniPathway" id="UPA00910"/>
<dbReference type="EvolutionaryTrace" id="Q0TTH1"/>
<dbReference type="Proteomes" id="UP000001823">
    <property type="component" value="Chromosome"/>
</dbReference>
<dbReference type="GO" id="GO:0051539">
    <property type="term" value="F:4 iron, 4 sulfur cluster binding"/>
    <property type="evidence" value="ECO:0007669"/>
    <property type="project" value="UniProtKB-KW"/>
</dbReference>
<dbReference type="GO" id="GO:0046872">
    <property type="term" value="F:metal ion binding"/>
    <property type="evidence" value="ECO:0007669"/>
    <property type="project" value="UniProtKB-KW"/>
</dbReference>
<dbReference type="GO" id="GO:0016491">
    <property type="term" value="F:oxidoreductase activity"/>
    <property type="evidence" value="ECO:0007669"/>
    <property type="project" value="UniProtKB-KW"/>
</dbReference>
<dbReference type="CDD" id="cd01335">
    <property type="entry name" value="Radical_SAM"/>
    <property type="match status" value="1"/>
</dbReference>
<dbReference type="CDD" id="cd21120">
    <property type="entry name" value="SPASM_anSME"/>
    <property type="match status" value="1"/>
</dbReference>
<dbReference type="Gene3D" id="3.20.20.70">
    <property type="entry name" value="Aldolase class I"/>
    <property type="match status" value="1"/>
</dbReference>
<dbReference type="InterPro" id="IPR023885">
    <property type="entry name" value="4Fe4S-binding_SPASM_dom"/>
</dbReference>
<dbReference type="InterPro" id="IPR013785">
    <property type="entry name" value="Aldolase_TIM"/>
</dbReference>
<dbReference type="InterPro" id="IPR034485">
    <property type="entry name" value="Anaerobic_Cys-type_sulfatase-m"/>
</dbReference>
<dbReference type="InterPro" id="IPR007197">
    <property type="entry name" value="rSAM"/>
</dbReference>
<dbReference type="InterPro" id="IPR047207">
    <property type="entry name" value="SPASM_anSME"/>
</dbReference>
<dbReference type="InterPro" id="IPR023867">
    <property type="entry name" value="Sulphatase_maturase_rSAM"/>
</dbReference>
<dbReference type="NCBIfam" id="NF010321">
    <property type="entry name" value="PRK13758.1"/>
    <property type="match status" value="1"/>
</dbReference>
<dbReference type="NCBIfam" id="TIGR04085">
    <property type="entry name" value="rSAM_more_4Fe4S"/>
    <property type="match status" value="1"/>
</dbReference>
<dbReference type="NCBIfam" id="TIGR03942">
    <property type="entry name" value="sulfatase_rSAM"/>
    <property type="match status" value="1"/>
</dbReference>
<dbReference type="PANTHER" id="PTHR43273">
    <property type="entry name" value="ANAEROBIC SULFATASE-MATURATING ENZYME HOMOLOG ASLB-RELATED"/>
    <property type="match status" value="1"/>
</dbReference>
<dbReference type="PANTHER" id="PTHR43273:SF3">
    <property type="entry name" value="ANAEROBIC SULFATASE-MATURATING ENZYME HOMOLOG ASLB-RELATED"/>
    <property type="match status" value="1"/>
</dbReference>
<dbReference type="Pfam" id="PF13353">
    <property type="entry name" value="Fer4_12"/>
    <property type="match status" value="1"/>
</dbReference>
<dbReference type="Pfam" id="PF04055">
    <property type="entry name" value="Radical_SAM"/>
    <property type="match status" value="1"/>
</dbReference>
<dbReference type="Pfam" id="PF13186">
    <property type="entry name" value="SPASM"/>
    <property type="match status" value="1"/>
</dbReference>
<dbReference type="SFLD" id="SFLDF00289">
    <property type="entry name" value="anaerobic_Cys-type_sulfatase-m"/>
    <property type="match status" value="1"/>
</dbReference>
<dbReference type="SFLD" id="SFLDS00029">
    <property type="entry name" value="Radical_SAM"/>
    <property type="match status" value="1"/>
</dbReference>
<dbReference type="SFLD" id="SFLDG01384">
    <property type="entry name" value="thioether_bond_formation_requi"/>
    <property type="match status" value="1"/>
</dbReference>
<dbReference type="SUPFAM" id="SSF102114">
    <property type="entry name" value="Radical SAM enzymes"/>
    <property type="match status" value="1"/>
</dbReference>
<dbReference type="PROSITE" id="PS51918">
    <property type="entry name" value="RADICAL_SAM"/>
    <property type="match status" value="1"/>
</dbReference>
<comment type="function">
    <text evidence="2 3 4 5 7">Involved in 'Cys-type' sulfatase maturation under anaerobic conditions. Catalyzes the post-translational modification of cysteine ('Cys-51' in the arylsulfatase CPF_0221) into 3-oxoalanine (also known as C(alpha)-formylglycine (FGly)), by a free radical chemical mechanism initiated via the reductive cleavage of S-adenosyl-L-methionine (SAM) (PubMed:16766528, PubMed:17335281, PubMed:18408004, PubMed:19489556, PubMed:23477283). Is also able to oxidize a serine residue in a synthetic substrate to FGly in vitro, and in a serine variant of a Cys-type sulfatase in vivo, but this activity is not physiological (PubMed:18408004, PubMed:23477283). Converts threonyl peptides to the corresponding ketone product, and also allo-threonyl peptides, but with a significantly reduced efficiency (PubMed:23477283).</text>
</comment>
<comment type="catalytic activity">
    <reaction evidence="3 4 5 6 7">
        <text>L-cysteinyl-[sulfatase] + S-adenosyl-L-methionine + H2O = 3-oxo-L-alanyl-[sulfatase] + hydrogen sulfide + 5'-deoxyadenosine + L-methionine + 2 H(+)</text>
        <dbReference type="Rhea" id="RHEA:61592"/>
        <dbReference type="Rhea" id="RHEA-COMP:12900"/>
        <dbReference type="Rhea" id="RHEA-COMP:12901"/>
        <dbReference type="ChEBI" id="CHEBI:15377"/>
        <dbReference type="ChEBI" id="CHEBI:15378"/>
        <dbReference type="ChEBI" id="CHEBI:17319"/>
        <dbReference type="ChEBI" id="CHEBI:29919"/>
        <dbReference type="ChEBI" id="CHEBI:29950"/>
        <dbReference type="ChEBI" id="CHEBI:57844"/>
        <dbReference type="ChEBI" id="CHEBI:59789"/>
        <dbReference type="ChEBI" id="CHEBI:85621"/>
        <dbReference type="EC" id="1.8.98.7"/>
    </reaction>
</comment>
<comment type="cofactor">
    <cofactor evidence="3 4 7 8">
        <name>[4Fe-4S] cluster</name>
        <dbReference type="ChEBI" id="CHEBI:49883"/>
    </cofactor>
    <text evidence="7 8">Binds 3 [4Fe-4S] clusters (PubMed:23477283, PubMed:23650368). The first cluster is coordinated with 3 cysteines and an exchangeable S-adenosyl-L-methionine (PubMed:23650368). The two auxiliary clusters may create a conduit for electrons to travel from the buried substrate to the protein surface (PubMed:23650368).</text>
</comment>
<comment type="pathway">
    <text evidence="11">Protein modification; sulfatase oxidation.</text>
</comment>
<comment type="subunit">
    <text evidence="7">Monomer.</text>
</comment>
<comment type="miscellaneous">
    <text>Recognizes the CXAXR sulfatase signature, in contrast to the oxygen-dependent formylglycine-generating enzyme system (FGE) that recognizes the CXPXR motif.</text>
</comment>
<comment type="similarity">
    <text evidence="11">Belongs to the radical SAM superfamily. Anaerobic sulfatase-maturating enzyme family.</text>
</comment>
<gene>
    <name type="ordered locus">CPF_0616</name>
</gene>
<evidence type="ECO:0000255" key="1">
    <source>
        <dbReference type="PROSITE-ProRule" id="PRU01266"/>
    </source>
</evidence>
<evidence type="ECO:0000269" key="2">
    <source>
    </source>
</evidence>
<evidence type="ECO:0000269" key="3">
    <source>
    </source>
</evidence>
<evidence type="ECO:0000269" key="4">
    <source>
    </source>
</evidence>
<evidence type="ECO:0000269" key="5">
    <source>
    </source>
</evidence>
<evidence type="ECO:0000269" key="6">
    <source>
    </source>
</evidence>
<evidence type="ECO:0000269" key="7">
    <source>
    </source>
</evidence>
<evidence type="ECO:0000269" key="8">
    <source>
    </source>
</evidence>
<evidence type="ECO:0000303" key="9">
    <source>
    </source>
</evidence>
<evidence type="ECO:0000303" key="10">
    <source>
    </source>
</evidence>
<evidence type="ECO:0000305" key="11"/>
<evidence type="ECO:0000305" key="12">
    <source>
    </source>
</evidence>
<evidence type="ECO:0007744" key="13">
    <source>
        <dbReference type="PDB" id="4K36"/>
    </source>
</evidence>
<evidence type="ECO:0007744" key="14">
    <source>
        <dbReference type="PDB" id="4K37"/>
    </source>
</evidence>
<evidence type="ECO:0007744" key="15">
    <source>
        <dbReference type="PDB" id="4K38"/>
    </source>
</evidence>
<evidence type="ECO:0007744" key="16">
    <source>
        <dbReference type="PDB" id="4K39"/>
    </source>
</evidence>
<evidence type="ECO:0007829" key="17">
    <source>
        <dbReference type="PDB" id="4K36"/>
    </source>
</evidence>
<evidence type="ECO:0007829" key="18">
    <source>
        <dbReference type="PDB" id="4K37"/>
    </source>
</evidence>